<dbReference type="EC" id="5.4.3.8"/>
<dbReference type="EMBL" id="BA000022">
    <property type="protein sequence ID" value="BAA10185.1"/>
    <property type="status" value="ALT_INIT"/>
    <property type="molecule type" value="Genomic_DNA"/>
</dbReference>
<dbReference type="PIR" id="S76333">
    <property type="entry name" value="S76333"/>
</dbReference>
<dbReference type="SMR" id="Q55665"/>
<dbReference type="FunCoup" id="Q55665">
    <property type="interactions" value="460"/>
</dbReference>
<dbReference type="IntAct" id="Q55665">
    <property type="interactions" value="1"/>
</dbReference>
<dbReference type="STRING" id="1148.gene:10499682"/>
<dbReference type="PaxDb" id="1148-1001558"/>
<dbReference type="EnsemblBacteria" id="BAA10185">
    <property type="protein sequence ID" value="BAA10185"/>
    <property type="gene ID" value="BAA10185"/>
</dbReference>
<dbReference type="KEGG" id="syn:sll0017"/>
<dbReference type="eggNOG" id="COG0001">
    <property type="taxonomic scope" value="Bacteria"/>
</dbReference>
<dbReference type="InParanoid" id="Q55665"/>
<dbReference type="PhylomeDB" id="Q55665"/>
<dbReference type="UniPathway" id="UPA00251">
    <property type="reaction ID" value="UER00317"/>
</dbReference>
<dbReference type="UniPathway" id="UPA00668"/>
<dbReference type="Proteomes" id="UP000001425">
    <property type="component" value="Chromosome"/>
</dbReference>
<dbReference type="GO" id="GO:0005737">
    <property type="term" value="C:cytoplasm"/>
    <property type="evidence" value="ECO:0007669"/>
    <property type="project" value="UniProtKB-SubCell"/>
</dbReference>
<dbReference type="GO" id="GO:0042286">
    <property type="term" value="F:glutamate-1-semialdehyde 2,1-aminomutase activity"/>
    <property type="evidence" value="ECO:0007669"/>
    <property type="project" value="UniProtKB-UniRule"/>
</dbReference>
<dbReference type="GO" id="GO:0030170">
    <property type="term" value="F:pyridoxal phosphate binding"/>
    <property type="evidence" value="ECO:0007669"/>
    <property type="project" value="InterPro"/>
</dbReference>
<dbReference type="GO" id="GO:0008483">
    <property type="term" value="F:transaminase activity"/>
    <property type="evidence" value="ECO:0007669"/>
    <property type="project" value="InterPro"/>
</dbReference>
<dbReference type="GO" id="GO:0015995">
    <property type="term" value="P:chlorophyll biosynthetic process"/>
    <property type="evidence" value="ECO:0007669"/>
    <property type="project" value="UniProtKB-UniRule"/>
</dbReference>
<dbReference type="GO" id="GO:0006782">
    <property type="term" value="P:protoporphyrinogen IX biosynthetic process"/>
    <property type="evidence" value="ECO:0007669"/>
    <property type="project" value="UniProtKB-UniRule"/>
</dbReference>
<dbReference type="CDD" id="cd00610">
    <property type="entry name" value="OAT_like"/>
    <property type="match status" value="1"/>
</dbReference>
<dbReference type="FunFam" id="3.40.640.10:FF:000021">
    <property type="entry name" value="Glutamate-1-semialdehyde 2,1-aminomutase"/>
    <property type="match status" value="1"/>
</dbReference>
<dbReference type="Gene3D" id="3.90.1150.10">
    <property type="entry name" value="Aspartate Aminotransferase, domain 1"/>
    <property type="match status" value="1"/>
</dbReference>
<dbReference type="Gene3D" id="3.40.640.10">
    <property type="entry name" value="Type I PLP-dependent aspartate aminotransferase-like (Major domain)"/>
    <property type="match status" value="1"/>
</dbReference>
<dbReference type="HAMAP" id="MF_00375">
    <property type="entry name" value="HemL_aminotrans_3"/>
    <property type="match status" value="1"/>
</dbReference>
<dbReference type="InterPro" id="IPR004639">
    <property type="entry name" value="4pyrrol_synth_GluAld_NH2Trfase"/>
</dbReference>
<dbReference type="InterPro" id="IPR005814">
    <property type="entry name" value="Aminotrans_3"/>
</dbReference>
<dbReference type="InterPro" id="IPR049704">
    <property type="entry name" value="Aminotrans_3_PPA_site"/>
</dbReference>
<dbReference type="InterPro" id="IPR015424">
    <property type="entry name" value="PyrdxlP-dep_Trfase"/>
</dbReference>
<dbReference type="InterPro" id="IPR015421">
    <property type="entry name" value="PyrdxlP-dep_Trfase_major"/>
</dbReference>
<dbReference type="InterPro" id="IPR015422">
    <property type="entry name" value="PyrdxlP-dep_Trfase_small"/>
</dbReference>
<dbReference type="NCBIfam" id="TIGR00713">
    <property type="entry name" value="hemL"/>
    <property type="match status" value="1"/>
</dbReference>
<dbReference type="NCBIfam" id="NF000818">
    <property type="entry name" value="PRK00062.1"/>
    <property type="match status" value="1"/>
</dbReference>
<dbReference type="PANTHER" id="PTHR43713">
    <property type="entry name" value="GLUTAMATE-1-SEMIALDEHYDE 2,1-AMINOMUTASE"/>
    <property type="match status" value="1"/>
</dbReference>
<dbReference type="PANTHER" id="PTHR43713:SF3">
    <property type="entry name" value="GLUTAMATE-1-SEMIALDEHYDE 2,1-AMINOMUTASE 1, CHLOROPLASTIC-RELATED"/>
    <property type="match status" value="1"/>
</dbReference>
<dbReference type="Pfam" id="PF00202">
    <property type="entry name" value="Aminotran_3"/>
    <property type="match status" value="1"/>
</dbReference>
<dbReference type="SUPFAM" id="SSF53383">
    <property type="entry name" value="PLP-dependent transferases"/>
    <property type="match status" value="1"/>
</dbReference>
<dbReference type="PROSITE" id="PS00600">
    <property type="entry name" value="AA_TRANSFER_CLASS_3"/>
    <property type="match status" value="1"/>
</dbReference>
<accession>Q55665</accession>
<gene>
    <name type="primary">hemL</name>
    <name type="synonym">gsa</name>
    <name type="ordered locus">sll0017</name>
</gene>
<sequence length="433" mass="45892">MVNATPFITTKSEEIFAAAQHLMPGGVSSPVRAFKSVGGQPIVFDRVEGAQIWDVDGNQYIDYVGTWGPAICGHAHPDVISALKQALDKGTSFGAPCAQENVLAEMVIDAVPSIEMVRFVNSGTEACMSVLRLMRAFTGREKIIKFEGCYHGHADMFLVKAGSGVATLGLPDSPGVPSNTTKATLTAPYNDLEAVKALFVENPDSIAGVILEPVVGNAGFILPDAGFLEGLRELTKEYGALLVFDEVMTGFRVSYGGAQARFGITPDLTTLGKVIGGGLPVGAYGGREEIMAMVAPAGPMYQAGTLSGNPLAMTAGIKTLEILQKPGSYEYLDKITKRLVDGLLAAAQDAGHEVCGGSISAMFGIFFAPGPVRNYEDAKLADTNKFARFHRGMLERGIYLAPSQYEAGFPSLAHTQEQIDQTIAVAKEVFATL</sequence>
<feature type="chain" id="PRO_0000120462" description="Glutamate-1-semialdehyde 2,1-aminomutase">
    <location>
        <begin position="1"/>
        <end position="433"/>
    </location>
</feature>
<feature type="modified residue" description="N6-(pyridoxal phosphate)lysine" evidence="1">
    <location>
        <position position="273"/>
    </location>
</feature>
<organism>
    <name type="scientific">Synechocystis sp. (strain ATCC 27184 / PCC 6803 / Kazusa)</name>
    <dbReference type="NCBI Taxonomy" id="1111708"/>
    <lineage>
        <taxon>Bacteria</taxon>
        <taxon>Bacillati</taxon>
        <taxon>Cyanobacteriota</taxon>
        <taxon>Cyanophyceae</taxon>
        <taxon>Synechococcales</taxon>
        <taxon>Merismopediaceae</taxon>
        <taxon>Synechocystis</taxon>
    </lineage>
</organism>
<proteinExistence type="inferred from homology"/>
<protein>
    <recommendedName>
        <fullName>Glutamate-1-semialdehyde 2,1-aminomutase</fullName>
        <shortName>GSA</shortName>
        <ecNumber>5.4.3.8</ecNumber>
    </recommendedName>
    <alternativeName>
        <fullName>Glutamate-1-semialdehyde aminotransferase</fullName>
        <shortName>GSA-AT</shortName>
    </alternativeName>
</protein>
<name>GSA_SYNY3</name>
<keyword id="KW-0149">Chlorophyll biosynthesis</keyword>
<keyword id="KW-0963">Cytoplasm</keyword>
<keyword id="KW-0413">Isomerase</keyword>
<keyword id="KW-0627">Porphyrin biosynthesis</keyword>
<keyword id="KW-0663">Pyridoxal phosphate</keyword>
<keyword id="KW-1185">Reference proteome</keyword>
<evidence type="ECO:0000250" key="1"/>
<evidence type="ECO:0000305" key="2"/>
<comment type="catalytic activity">
    <reaction>
        <text>(S)-4-amino-5-oxopentanoate = 5-aminolevulinate</text>
        <dbReference type="Rhea" id="RHEA:14265"/>
        <dbReference type="ChEBI" id="CHEBI:57501"/>
        <dbReference type="ChEBI" id="CHEBI:356416"/>
        <dbReference type="EC" id="5.4.3.8"/>
    </reaction>
</comment>
<comment type="cofactor">
    <cofactor evidence="1">
        <name>pyridoxal 5'-phosphate</name>
        <dbReference type="ChEBI" id="CHEBI:597326"/>
    </cofactor>
</comment>
<comment type="pathway">
    <text>Porphyrin-containing compound metabolism; protoporphyrin-IX biosynthesis; 5-aminolevulinate from L-glutamyl-tRNA(Glu): step 2/2.</text>
</comment>
<comment type="pathway">
    <text>Porphyrin-containing compound metabolism; chlorophyll biosynthesis.</text>
</comment>
<comment type="subunit">
    <text>Homodimer.</text>
</comment>
<comment type="subcellular location">
    <subcellularLocation>
        <location evidence="2">Cytoplasm</location>
    </subcellularLocation>
</comment>
<comment type="similarity">
    <text evidence="2">Belongs to the class-III pyridoxal-phosphate-dependent aminotransferase family. HemL subfamily.</text>
</comment>
<comment type="sequence caution" evidence="2">
    <conflict type="erroneous initiation">
        <sequence resource="EMBL-CDS" id="BAA10185"/>
    </conflict>
</comment>
<reference key="1">
    <citation type="journal article" date="1995" name="DNA Res.">
        <title>Sequence analysis of the genome of the unicellular cyanobacterium Synechocystis sp. strain PCC6803. I. Sequence features in the 1 Mb region from map positions 64% to 92% of the genome.</title>
        <authorList>
            <person name="Kaneko T."/>
            <person name="Tanaka A."/>
            <person name="Sato S."/>
            <person name="Kotani H."/>
            <person name="Sazuka T."/>
            <person name="Miyajima N."/>
            <person name="Sugiura M."/>
            <person name="Tabata S."/>
        </authorList>
    </citation>
    <scope>NUCLEOTIDE SEQUENCE [LARGE SCALE GENOMIC DNA]</scope>
    <source>
        <strain>ATCC 27184 / PCC 6803 / N-1</strain>
    </source>
</reference>
<reference key="2">
    <citation type="journal article" date="1996" name="DNA Res.">
        <title>Sequence analysis of the genome of the unicellular cyanobacterium Synechocystis sp. strain PCC6803. II. Sequence determination of the entire genome and assignment of potential protein-coding regions.</title>
        <authorList>
            <person name="Kaneko T."/>
            <person name="Sato S."/>
            <person name="Kotani H."/>
            <person name="Tanaka A."/>
            <person name="Asamizu E."/>
            <person name="Nakamura Y."/>
            <person name="Miyajima N."/>
            <person name="Hirosawa M."/>
            <person name="Sugiura M."/>
            <person name="Sasamoto S."/>
            <person name="Kimura T."/>
            <person name="Hosouchi T."/>
            <person name="Matsuno A."/>
            <person name="Muraki A."/>
            <person name="Nakazaki N."/>
            <person name="Naruo K."/>
            <person name="Okumura S."/>
            <person name="Shimpo S."/>
            <person name="Takeuchi C."/>
            <person name="Wada T."/>
            <person name="Watanabe A."/>
            <person name="Yamada M."/>
            <person name="Yasuda M."/>
            <person name="Tabata S."/>
        </authorList>
    </citation>
    <scope>NUCLEOTIDE SEQUENCE [LARGE SCALE GENOMIC DNA]</scope>
    <source>
        <strain>ATCC 27184 / PCC 6803 / Kazusa</strain>
    </source>
</reference>